<comment type="catalytic activity">
    <reaction evidence="1">
        <text>D-arabinose 5-phosphate + phosphoenolpyruvate + H2O = 3-deoxy-alpha-D-manno-2-octulosonate-8-phosphate + phosphate</text>
        <dbReference type="Rhea" id="RHEA:14053"/>
        <dbReference type="ChEBI" id="CHEBI:15377"/>
        <dbReference type="ChEBI" id="CHEBI:43474"/>
        <dbReference type="ChEBI" id="CHEBI:57693"/>
        <dbReference type="ChEBI" id="CHEBI:58702"/>
        <dbReference type="ChEBI" id="CHEBI:85985"/>
        <dbReference type="EC" id="2.5.1.55"/>
    </reaction>
</comment>
<comment type="pathway">
    <text evidence="1">Carbohydrate biosynthesis; 3-deoxy-D-manno-octulosonate biosynthesis; 3-deoxy-D-manno-octulosonate from D-ribulose 5-phosphate: step 2/3.</text>
</comment>
<comment type="pathway">
    <text evidence="1">Bacterial outer membrane biogenesis; lipopolysaccharide biosynthesis.</text>
</comment>
<comment type="subcellular location">
    <subcellularLocation>
        <location evidence="1">Cytoplasm</location>
    </subcellularLocation>
</comment>
<comment type="similarity">
    <text evidence="1">Belongs to the KdsA family.</text>
</comment>
<accession>Q8G0G2</accession>
<accession>G0KA55</accession>
<keyword id="KW-0963">Cytoplasm</keyword>
<keyword id="KW-0448">Lipopolysaccharide biosynthesis</keyword>
<keyword id="KW-0808">Transferase</keyword>
<sequence length="277" mass="29479">MVTANSTVKVGNVTFSNSAPLALIAGPCQMETRDHAFEMAGHLKEMTDKLGIGLVYKSSFDKANRTSLKAARGIGLEKALEVFSDLKKEYGFPVLTDIHTEEQCAAVAPVVDVLQIPAFLCRQTDLLIAAARTGRVVNVKKGQFLAPWDMKNVLAKITESGNPNVLATERGVSFGYNTLVSDMRALPIMAGLGAPVIFDATHSVQQPGGQGGSTGGQREFVETLARAAVAVGVAGLFIETHEDPDNAPSDGPNMVPIDKMPALLEKLMAFDRIAKAL</sequence>
<evidence type="ECO:0000255" key="1">
    <source>
        <dbReference type="HAMAP-Rule" id="MF_00056"/>
    </source>
</evidence>
<gene>
    <name evidence="1" type="primary">kdsA</name>
    <name type="ordered locus">BR1133</name>
    <name type="ordered locus">BS1330_I1129</name>
</gene>
<organism>
    <name type="scientific">Brucella suis biovar 1 (strain 1330)</name>
    <dbReference type="NCBI Taxonomy" id="204722"/>
    <lineage>
        <taxon>Bacteria</taxon>
        <taxon>Pseudomonadati</taxon>
        <taxon>Pseudomonadota</taxon>
        <taxon>Alphaproteobacteria</taxon>
        <taxon>Hyphomicrobiales</taxon>
        <taxon>Brucellaceae</taxon>
        <taxon>Brucella/Ochrobactrum group</taxon>
        <taxon>Brucella</taxon>
    </lineage>
</organism>
<proteinExistence type="inferred from homology"/>
<feature type="chain" id="PRO_0000187108" description="2-dehydro-3-deoxyphosphooctonate aldolase">
    <location>
        <begin position="1"/>
        <end position="277"/>
    </location>
</feature>
<name>KDSA_BRUSU</name>
<reference key="1">
    <citation type="journal article" date="2002" name="Proc. Natl. Acad. Sci. U.S.A.">
        <title>The Brucella suis genome reveals fundamental similarities between animal and plant pathogens and symbionts.</title>
        <authorList>
            <person name="Paulsen I.T."/>
            <person name="Seshadri R."/>
            <person name="Nelson K.E."/>
            <person name="Eisen J.A."/>
            <person name="Heidelberg J.F."/>
            <person name="Read T.D."/>
            <person name="Dodson R.J."/>
            <person name="Umayam L.A."/>
            <person name="Brinkac L.M."/>
            <person name="Beanan M.J."/>
            <person name="Daugherty S.C."/>
            <person name="DeBoy R.T."/>
            <person name="Durkin A.S."/>
            <person name="Kolonay J.F."/>
            <person name="Madupu R."/>
            <person name="Nelson W.C."/>
            <person name="Ayodeji B."/>
            <person name="Kraul M."/>
            <person name="Shetty J."/>
            <person name="Malek J.A."/>
            <person name="Van Aken S.E."/>
            <person name="Riedmuller S."/>
            <person name="Tettelin H."/>
            <person name="Gill S.R."/>
            <person name="White O."/>
            <person name="Salzberg S.L."/>
            <person name="Hoover D.L."/>
            <person name="Lindler L.E."/>
            <person name="Halling S.M."/>
            <person name="Boyle S.M."/>
            <person name="Fraser C.M."/>
        </authorList>
    </citation>
    <scope>NUCLEOTIDE SEQUENCE [LARGE SCALE GENOMIC DNA]</scope>
    <source>
        <strain>1330</strain>
    </source>
</reference>
<reference key="2">
    <citation type="journal article" date="2011" name="J. Bacteriol.">
        <title>Revised genome sequence of Brucella suis 1330.</title>
        <authorList>
            <person name="Tae H."/>
            <person name="Shallom S."/>
            <person name="Settlage R."/>
            <person name="Preston D."/>
            <person name="Adams L.G."/>
            <person name="Garner H.R."/>
        </authorList>
    </citation>
    <scope>NUCLEOTIDE SEQUENCE [LARGE SCALE GENOMIC DNA]</scope>
    <source>
        <strain>1330</strain>
    </source>
</reference>
<protein>
    <recommendedName>
        <fullName evidence="1">2-dehydro-3-deoxyphosphooctonate aldolase</fullName>
        <ecNumber evidence="1">2.5.1.55</ecNumber>
    </recommendedName>
    <alternativeName>
        <fullName evidence="1">3-deoxy-D-manno-octulosonic acid 8-phosphate synthase</fullName>
    </alternativeName>
    <alternativeName>
        <fullName evidence="1">KDO-8-phosphate synthase</fullName>
        <shortName evidence="1">KDO 8-P synthase</shortName>
        <shortName evidence="1">KDOPS</shortName>
    </alternativeName>
    <alternativeName>
        <fullName evidence="1">Phospho-2-dehydro-3-deoxyoctonate aldolase</fullName>
    </alternativeName>
</protein>
<dbReference type="EC" id="2.5.1.55" evidence="1"/>
<dbReference type="EMBL" id="AE014291">
    <property type="protein sequence ID" value="AAN30053.1"/>
    <property type="molecule type" value="Genomic_DNA"/>
</dbReference>
<dbReference type="EMBL" id="CP002997">
    <property type="protein sequence ID" value="AEM18471.1"/>
    <property type="molecule type" value="Genomic_DNA"/>
</dbReference>
<dbReference type="RefSeq" id="WP_004690885.1">
    <property type="nucleotide sequence ID" value="NZ_KN046804.1"/>
</dbReference>
<dbReference type="SMR" id="Q8G0G2"/>
<dbReference type="GeneID" id="55590817"/>
<dbReference type="KEGG" id="bms:BR1133"/>
<dbReference type="KEGG" id="bsi:BS1330_I1129"/>
<dbReference type="PATRIC" id="fig|204722.21.peg.1988"/>
<dbReference type="HOGENOM" id="CLU_036666_0_0_5"/>
<dbReference type="PhylomeDB" id="Q8G0G2"/>
<dbReference type="UniPathway" id="UPA00030"/>
<dbReference type="UniPathway" id="UPA00357">
    <property type="reaction ID" value="UER00474"/>
</dbReference>
<dbReference type="Proteomes" id="UP000007104">
    <property type="component" value="Chromosome I"/>
</dbReference>
<dbReference type="GO" id="GO:0005737">
    <property type="term" value="C:cytoplasm"/>
    <property type="evidence" value="ECO:0007669"/>
    <property type="project" value="UniProtKB-SubCell"/>
</dbReference>
<dbReference type="GO" id="GO:0008676">
    <property type="term" value="F:3-deoxy-8-phosphooctulonate synthase activity"/>
    <property type="evidence" value="ECO:0007669"/>
    <property type="project" value="UniProtKB-UniRule"/>
</dbReference>
<dbReference type="GO" id="GO:0019294">
    <property type="term" value="P:keto-3-deoxy-D-manno-octulosonic acid biosynthetic process"/>
    <property type="evidence" value="ECO:0007669"/>
    <property type="project" value="UniProtKB-UniRule"/>
</dbReference>
<dbReference type="Gene3D" id="3.20.20.70">
    <property type="entry name" value="Aldolase class I"/>
    <property type="match status" value="1"/>
</dbReference>
<dbReference type="HAMAP" id="MF_00056">
    <property type="entry name" value="KDO8P_synth"/>
    <property type="match status" value="1"/>
</dbReference>
<dbReference type="InterPro" id="IPR013785">
    <property type="entry name" value="Aldolase_TIM"/>
</dbReference>
<dbReference type="InterPro" id="IPR006218">
    <property type="entry name" value="DAHP1/KDSA"/>
</dbReference>
<dbReference type="InterPro" id="IPR006269">
    <property type="entry name" value="KDO8P_synthase"/>
</dbReference>
<dbReference type="NCBIfam" id="TIGR01362">
    <property type="entry name" value="KDO8P_synth"/>
    <property type="match status" value="1"/>
</dbReference>
<dbReference type="NCBIfam" id="NF003543">
    <property type="entry name" value="PRK05198.1"/>
    <property type="match status" value="1"/>
</dbReference>
<dbReference type="PANTHER" id="PTHR21057">
    <property type="entry name" value="PHOSPHO-2-DEHYDRO-3-DEOXYHEPTONATE ALDOLASE"/>
    <property type="match status" value="1"/>
</dbReference>
<dbReference type="Pfam" id="PF00793">
    <property type="entry name" value="DAHP_synth_1"/>
    <property type="match status" value="1"/>
</dbReference>
<dbReference type="SUPFAM" id="SSF51569">
    <property type="entry name" value="Aldolase"/>
    <property type="match status" value="1"/>
</dbReference>